<accession>Q57144</accession>
<accession>O05022</accession>
<feature type="chain" id="PRO_0000077925" description="Uncharacterized protein HI_0461">
    <location>
        <begin position="1"/>
        <end position="291"/>
    </location>
</feature>
<gene>
    <name type="ordered locus">HI_0461</name>
</gene>
<dbReference type="EMBL" id="L42023">
    <property type="protein sequence ID" value="AAC22119.1"/>
    <property type="molecule type" value="Genomic_DNA"/>
</dbReference>
<dbReference type="PIR" id="I64069">
    <property type="entry name" value="I64069"/>
</dbReference>
<dbReference type="RefSeq" id="NP_438622.1">
    <property type="nucleotide sequence ID" value="NC_000907.1"/>
</dbReference>
<dbReference type="STRING" id="71421.HI_0461"/>
<dbReference type="EnsemblBacteria" id="AAC22119">
    <property type="protein sequence ID" value="AAC22119"/>
    <property type="gene ID" value="HI_0461"/>
</dbReference>
<dbReference type="KEGG" id="hin:HI_0461"/>
<dbReference type="PATRIC" id="fig|71421.8.peg.481"/>
<dbReference type="eggNOG" id="COG2990">
    <property type="taxonomic scope" value="Bacteria"/>
</dbReference>
<dbReference type="HOGENOM" id="CLU_065818_3_0_6"/>
<dbReference type="OrthoDB" id="6835762at2"/>
<dbReference type="PhylomeDB" id="Q57144"/>
<dbReference type="BioCyc" id="HINF71421:G1GJ1-477-MONOMER"/>
<dbReference type="Proteomes" id="UP000000579">
    <property type="component" value="Chromosome"/>
</dbReference>
<dbReference type="GO" id="GO:0006974">
    <property type="term" value="P:DNA damage response"/>
    <property type="evidence" value="ECO:0000318"/>
    <property type="project" value="GO_Central"/>
</dbReference>
<dbReference type="InterPro" id="IPR007488">
    <property type="entry name" value="DUF535"/>
</dbReference>
<dbReference type="PANTHER" id="PTHR38785">
    <property type="entry name" value="HOMOLOG OF VIRK"/>
    <property type="match status" value="1"/>
</dbReference>
<dbReference type="PANTHER" id="PTHR38785:SF1">
    <property type="entry name" value="HOMOLOG OF VIRK"/>
    <property type="match status" value="1"/>
</dbReference>
<dbReference type="Pfam" id="PF04393">
    <property type="entry name" value="DUF535"/>
    <property type="match status" value="1"/>
</dbReference>
<proteinExistence type="evidence at protein level"/>
<keyword id="KW-1185">Reference proteome</keyword>
<protein>
    <recommendedName>
        <fullName>Uncharacterized protein HI_0461</fullName>
    </recommendedName>
</protein>
<organism>
    <name type="scientific">Haemophilus influenzae (strain ATCC 51907 / DSM 11121 / KW20 / Rd)</name>
    <dbReference type="NCBI Taxonomy" id="71421"/>
    <lineage>
        <taxon>Bacteria</taxon>
        <taxon>Pseudomonadati</taxon>
        <taxon>Pseudomonadota</taxon>
        <taxon>Gammaproteobacteria</taxon>
        <taxon>Pasteurellales</taxon>
        <taxon>Pasteurellaceae</taxon>
        <taxon>Haemophilus</taxon>
    </lineage>
</organism>
<name>Y461_HAEIN</name>
<reference key="1">
    <citation type="journal article" date="1995" name="Science">
        <title>Whole-genome random sequencing and assembly of Haemophilus influenzae Rd.</title>
        <authorList>
            <person name="Fleischmann R.D."/>
            <person name="Adams M.D."/>
            <person name="White O."/>
            <person name="Clayton R.A."/>
            <person name="Kirkness E.F."/>
            <person name="Kerlavage A.R."/>
            <person name="Bult C.J."/>
            <person name="Tomb J.-F."/>
            <person name="Dougherty B.A."/>
            <person name="Merrick J.M."/>
            <person name="McKenney K."/>
            <person name="Sutton G.G."/>
            <person name="FitzHugh W."/>
            <person name="Fields C.A."/>
            <person name="Gocayne J.D."/>
            <person name="Scott J.D."/>
            <person name="Shirley R."/>
            <person name="Liu L.-I."/>
            <person name="Glodek A."/>
            <person name="Kelley J.M."/>
            <person name="Weidman J.F."/>
            <person name="Phillips C.A."/>
            <person name="Spriggs T."/>
            <person name="Hedblom E."/>
            <person name="Cotton M.D."/>
            <person name="Utterback T.R."/>
            <person name="Hanna M.C."/>
            <person name="Nguyen D.T."/>
            <person name="Saudek D.M."/>
            <person name="Brandon R.C."/>
            <person name="Fine L.D."/>
            <person name="Fritchman J.L."/>
            <person name="Fuhrmann J.L."/>
            <person name="Geoghagen N.S.M."/>
            <person name="Gnehm C.L."/>
            <person name="McDonald L.A."/>
            <person name="Small K.V."/>
            <person name="Fraser C.M."/>
            <person name="Smith H.O."/>
            <person name="Venter J.C."/>
        </authorList>
    </citation>
    <scope>NUCLEOTIDE SEQUENCE [LARGE SCALE GENOMIC DNA]</scope>
    <source>
        <strain>ATCC 51907 / DSM 11121 / KW20 / Rd</strain>
    </source>
</reference>
<reference key="2">
    <citation type="journal article" date="2000" name="Electrophoresis">
        <title>Two-dimensional map of the proteome of Haemophilus influenzae.</title>
        <authorList>
            <person name="Langen H."/>
            <person name="Takacs B."/>
            <person name="Evers S."/>
            <person name="Berndt P."/>
            <person name="Lahm H.W."/>
            <person name="Wipf B."/>
            <person name="Gray C."/>
            <person name="Fountoulakis M."/>
        </authorList>
    </citation>
    <scope>IDENTIFICATION BY MASS SPECTROMETRY</scope>
    <source>
        <strain>ATCC 51907 / DSM 11121 / KW20 / Rd</strain>
    </source>
</reference>
<sequence length="291" mass="34846">MSTKNHFIFPTYVQMYPYSKDRPFLKQVREKLRYYGYKWLYQKQCSQLVDFLNTETQWQSLFTQDYYRTNTILTTFCDKRFSASERLTAITENLRLAEEKMGRSLCQQLLDQQHIVLTQLTEDLRLSLSINHIDPFEGYFSINIRNQNNERVYDSSFTFLSPNKLLIASIQGPSSDNAQELVKQATKALHGMRPMFMLVNGFKMLAEKWQCELVGIPHKAQGKYRLSARSKILFNYDEFWQENQGEYRHNYWQLPLHIERKQLEDIASKKRSMYRKRYEMLDQMALDIQQL</sequence>